<feature type="signal peptide" evidence="3">
    <location>
        <begin position="1"/>
        <end position="23"/>
    </location>
</feature>
<feature type="propeptide" id="PRO_0000033960" evidence="3">
    <location>
        <begin position="24"/>
        <end position="266"/>
    </location>
</feature>
<feature type="chain" id="PRO_0000033961" description="Growth/differentiation factor 8">
    <location>
        <begin position="267"/>
        <end position="375"/>
    </location>
</feature>
<feature type="site" description="Cleavage" evidence="1">
    <location>
        <begin position="98"/>
        <end position="99"/>
    </location>
</feature>
<feature type="glycosylation site" description="N-linked (GlcNAc...) asparagine" evidence="3">
    <location>
        <position position="71"/>
    </location>
</feature>
<feature type="disulfide bond" evidence="2">
    <location>
        <begin position="272"/>
        <end position="282"/>
    </location>
</feature>
<feature type="disulfide bond" evidence="2">
    <location>
        <begin position="281"/>
        <end position="340"/>
    </location>
</feature>
<feature type="disulfide bond" evidence="2">
    <location>
        <begin position="309"/>
        <end position="372"/>
    </location>
</feature>
<feature type="disulfide bond" evidence="2">
    <location>
        <begin position="313"/>
        <end position="374"/>
    </location>
</feature>
<feature type="disulfide bond" description="Interchain" evidence="2">
    <location>
        <position position="339"/>
    </location>
</feature>
<gene>
    <name type="primary">MSTN</name>
    <name type="synonym">GDF8</name>
</gene>
<proteinExistence type="evidence at transcript level"/>
<name>GDF8_PIG</name>
<keyword id="KW-0165">Cleavage on pair of basic residues</keyword>
<keyword id="KW-0202">Cytokine</keyword>
<keyword id="KW-1015">Disulfide bond</keyword>
<keyword id="KW-0325">Glycoprotein</keyword>
<keyword id="KW-0339">Growth factor</keyword>
<keyword id="KW-0358">Heparin-binding</keyword>
<keyword id="KW-1185">Reference proteome</keyword>
<keyword id="KW-0964">Secreted</keyword>
<keyword id="KW-0732">Signal</keyword>
<evidence type="ECO:0000250" key="1">
    <source>
        <dbReference type="UniProtKB" id="O08689"/>
    </source>
</evidence>
<evidence type="ECO:0000250" key="2">
    <source>
        <dbReference type="UniProtKB" id="O14793"/>
    </source>
</evidence>
<evidence type="ECO:0000255" key="3"/>
<evidence type="ECO:0000305" key="4"/>
<reference key="1">
    <citation type="journal article" date="1997" name="Proc. Natl. Acad. Sci. U.S.A.">
        <title>Double muscling in cattle due to mutations in the myostatin gene.</title>
        <authorList>
            <person name="McPherron A.C."/>
            <person name="Lee S.-J."/>
        </authorList>
    </citation>
    <scope>NUCLEOTIDE SEQUENCE [MRNA]</scope>
    <source>
        <tissue>Skeletal muscle</tissue>
    </source>
</reference>
<reference key="2">
    <citation type="journal article" date="2005" name="Sci. China, Ser. C, Life Sci.">
        <title>Comparative analysis of the pig BAC sequence involved in the regulation of myostatin gene.</title>
        <authorList>
            <person name="Yu Z."/>
            <person name="Li Y."/>
            <person name="Meng Q."/>
            <person name="Yuan J."/>
            <person name="Zhao Z."/>
            <person name="Li W."/>
            <person name="Hu X."/>
            <person name="Yan B."/>
            <person name="Fan B."/>
            <person name="Yu S."/>
            <person name="Li N."/>
        </authorList>
    </citation>
    <scope>NUCLEOTIDE SEQUENCE [GENOMIC DNA]</scope>
</reference>
<reference key="3">
    <citation type="submission" date="1999-09" db="EMBL/GenBank/DDBJ databases">
        <title>Porcine myostatin cDNA sequences: Duroc, Hampshire, Meishan and Yorkshire pigs.</title>
        <authorList>
            <person name="Voelker G.R."/>
            <person name="Conroy J.C."/>
            <person name="Wheeler M.B."/>
        </authorList>
    </citation>
    <scope>NUCLEOTIDE SEQUENCE [MRNA]</scope>
    <source>
        <strain>Duroc</strain>
        <strain>Hampshire</strain>
        <strain>Meishan</strain>
        <strain>Yorkshire</strain>
        <tissue>Skeletal muscle</tissue>
    </source>
</reference>
<reference key="4">
    <citation type="submission" date="2007-03" db="EMBL/GenBank/DDBJ databases">
        <title>Characterization of the porcine MSTN gene in different pig breeds.</title>
        <authorList>
            <person name="Stinckens A."/>
            <person name="Luyten T."/>
            <person name="Bijttebier J."/>
            <person name="Van den Maagdenberg K."/>
            <person name="Dieltiens D."/>
            <person name="Janssens S."/>
            <person name="De Smet S."/>
            <person name="Georges M."/>
            <person name="Buys N."/>
        </authorList>
    </citation>
    <scope>NUCLEOTIDE SEQUENCE [GENOMIC DNA]</scope>
    <source>
        <strain>Landrace</strain>
        <strain>Large white</strain>
        <strain>Meishan</strain>
        <strain>Pietrain</strain>
    </source>
</reference>
<reference key="5">
    <citation type="submission" date="1998-09" db="EMBL/GenBank/DDBJ databases">
        <authorList>
            <person name="Daneau I."/>
            <person name="Silversides D.W."/>
        </authorList>
    </citation>
    <scope>NUCLEOTIDE SEQUENCE [GENOMIC DNA] OF 1-10</scope>
    <scope>NUCLEOTIDE SEQUENCE [MRNA] OF 36-375</scope>
    <source>
        <tissue>Muscle</tissue>
    </source>
</reference>
<comment type="function">
    <text evidence="1">Acts specifically as a negative regulator of skeletal muscle growth.</text>
</comment>
<comment type="subunit">
    <text evidence="1">Homodimer; disulfide-linked. Interacts with WFIKKN2, leading to inhibit its activity. Interacts with FSTL3.</text>
</comment>
<comment type="subcellular location">
    <subcellularLocation>
        <location evidence="1">Secreted</location>
    </subcellularLocation>
</comment>
<comment type="PTM">
    <text evidence="1">Synthesized as large precursor molecule that undergoes proteolytic cleavage to generate an N-terminal propeptide and a disulfide linked C-terminal dimer, which is the biologically active molecule. The circulating form consists of a latent complex of the C-terminal dimer and other proteins, including its propeptide, which maintain the C-terminal dimer in a latent, inactive state. Ligand activation requires additional cleavage of the prodomain by a tolloid-like metalloproteinase.</text>
</comment>
<comment type="similarity">
    <text evidence="4">Belongs to the TGF-beta family.</text>
</comment>
<dbReference type="EMBL" id="AF019623">
    <property type="protein sequence ID" value="AAB86690.1"/>
    <property type="molecule type" value="mRNA"/>
</dbReference>
<dbReference type="EMBL" id="AY208121">
    <property type="protein sequence ID" value="AAO31983.1"/>
    <property type="molecule type" value="Genomic_DNA"/>
</dbReference>
<dbReference type="EMBL" id="AF188635">
    <property type="protein sequence ID" value="AAF02770.1"/>
    <property type="molecule type" value="mRNA"/>
</dbReference>
<dbReference type="EMBL" id="AF188636">
    <property type="protein sequence ID" value="AAF02771.1"/>
    <property type="molecule type" value="mRNA"/>
</dbReference>
<dbReference type="EMBL" id="AF188637">
    <property type="protein sequence ID" value="AAF02772.1"/>
    <property type="molecule type" value="mRNA"/>
</dbReference>
<dbReference type="EMBL" id="AF188638">
    <property type="protein sequence ID" value="AAF02773.1"/>
    <property type="molecule type" value="mRNA"/>
</dbReference>
<dbReference type="EMBL" id="EF490986">
    <property type="protein sequence ID" value="ABO64638.1"/>
    <property type="molecule type" value="Genomic_DNA"/>
</dbReference>
<dbReference type="EMBL" id="EF490987">
    <property type="protein sequence ID" value="ABO64639.1"/>
    <property type="molecule type" value="Genomic_DNA"/>
</dbReference>
<dbReference type="EMBL" id="EF490988">
    <property type="protein sequence ID" value="ABO64640.1"/>
    <property type="molecule type" value="Genomic_DNA"/>
</dbReference>
<dbReference type="EMBL" id="EF490989">
    <property type="protein sequence ID" value="ABO64641.1"/>
    <property type="molecule type" value="Genomic_DNA"/>
</dbReference>
<dbReference type="EMBL" id="EF490990">
    <property type="protein sequence ID" value="ABO64642.1"/>
    <property type="molecule type" value="Genomic_DNA"/>
</dbReference>
<dbReference type="EMBL" id="AF033855">
    <property type="protein sequence ID" value="AAC08035.1"/>
    <property type="molecule type" value="mRNA"/>
</dbReference>
<dbReference type="EMBL" id="AF093798">
    <property type="protein sequence ID" value="AAC62489.1"/>
    <property type="molecule type" value="Genomic_DNA"/>
</dbReference>
<dbReference type="SMR" id="O18831"/>
<dbReference type="FunCoup" id="O18831">
    <property type="interactions" value="195"/>
</dbReference>
<dbReference type="STRING" id="9823.ENSSSCP00000017001"/>
<dbReference type="GlyCosmos" id="O18831">
    <property type="glycosylation" value="1 site, No reported glycans"/>
</dbReference>
<dbReference type="GlyGen" id="O18831">
    <property type="glycosylation" value="1 site"/>
</dbReference>
<dbReference type="PaxDb" id="9823-ENSSSCP00000017001"/>
<dbReference type="PeptideAtlas" id="O18831"/>
<dbReference type="Ensembl" id="ENSSSCT00000017472.5">
    <property type="protein sequence ID" value="ENSSSCP00000017001.2"/>
    <property type="gene ID" value="ENSSSCG00000016047.5"/>
</dbReference>
<dbReference type="Ensembl" id="ENSSSCT00015002832.1">
    <property type="protein sequence ID" value="ENSSSCP00015000900.1"/>
    <property type="gene ID" value="ENSSSCG00015002286.1"/>
</dbReference>
<dbReference type="Ensembl" id="ENSSSCT00025067980.1">
    <property type="protein sequence ID" value="ENSSSCP00025029196.1"/>
    <property type="gene ID" value="ENSSSCG00025049835.1"/>
</dbReference>
<dbReference type="Ensembl" id="ENSSSCT00030023330.1">
    <property type="protein sequence ID" value="ENSSSCP00030010461.1"/>
    <property type="gene ID" value="ENSSSCG00030016859.1"/>
</dbReference>
<dbReference type="Ensembl" id="ENSSSCT00035037306.1">
    <property type="protein sequence ID" value="ENSSSCP00035014874.1"/>
    <property type="gene ID" value="ENSSSCG00035028194.1"/>
</dbReference>
<dbReference type="Ensembl" id="ENSSSCT00040025633.1">
    <property type="protein sequence ID" value="ENSSSCP00040010829.1"/>
    <property type="gene ID" value="ENSSSCG00040018971.1"/>
</dbReference>
<dbReference type="Ensembl" id="ENSSSCT00045018814.1">
    <property type="protein sequence ID" value="ENSSSCP00045012947.1"/>
    <property type="gene ID" value="ENSSSCG00045011070.1"/>
</dbReference>
<dbReference type="Ensembl" id="ENSSSCT00050016408.1">
    <property type="protein sequence ID" value="ENSSSCP00050006740.1"/>
    <property type="gene ID" value="ENSSSCG00050012141.1"/>
</dbReference>
<dbReference type="Ensembl" id="ENSSSCT00055042989.1">
    <property type="protein sequence ID" value="ENSSSCP00055034200.1"/>
    <property type="gene ID" value="ENSSSCG00055021878.1"/>
</dbReference>
<dbReference type="Ensembl" id="ENSSSCT00060094644.1">
    <property type="protein sequence ID" value="ENSSSCP00060040929.1"/>
    <property type="gene ID" value="ENSSSCG00060069269.1"/>
</dbReference>
<dbReference type="Ensembl" id="ENSSSCT00065034252.1">
    <property type="protein sequence ID" value="ENSSSCP00065014182.1"/>
    <property type="gene ID" value="ENSSSCG00065025598.1"/>
</dbReference>
<dbReference type="Ensembl" id="ENSSSCT00070018169.1">
    <property type="protein sequence ID" value="ENSSSCP00070015094.1"/>
    <property type="gene ID" value="ENSSSCG00070009359.1"/>
</dbReference>
<dbReference type="Ensembl" id="ENSSSCT00085013730">
    <property type="protein sequence ID" value="ENSSSCP00085009979"/>
    <property type="gene ID" value="ENSSSCG00085007210"/>
</dbReference>
<dbReference type="Ensembl" id="ENSSSCT00090031385">
    <property type="protein sequence ID" value="ENSSSCP00090019428"/>
    <property type="gene ID" value="ENSSSCG00090017789"/>
</dbReference>
<dbReference type="Ensembl" id="ENSSSCT00105021192">
    <property type="protein sequence ID" value="ENSSSCP00105015312"/>
    <property type="gene ID" value="ENSSSCG00105010594"/>
</dbReference>
<dbReference type="Ensembl" id="ENSSSCT00110006313">
    <property type="protein sequence ID" value="ENSSSCP00110004633"/>
    <property type="gene ID" value="ENSSSCG00110003188"/>
</dbReference>
<dbReference type="Ensembl" id="ENSSSCT00115000493">
    <property type="protein sequence ID" value="ENSSSCP00115000439"/>
    <property type="gene ID" value="ENSSSCG00115000357"/>
</dbReference>
<dbReference type="Ensembl" id="ENSSSCT00130041970">
    <property type="protein sequence ID" value="ENSSSCP00130029666"/>
    <property type="gene ID" value="ENSSSCG00130021617"/>
</dbReference>
<dbReference type="VGNC" id="VGNC:96320">
    <property type="gene designation" value="MSTN"/>
</dbReference>
<dbReference type="eggNOG" id="KOG3900">
    <property type="taxonomic scope" value="Eukaryota"/>
</dbReference>
<dbReference type="GeneTree" id="ENSGT00940000160657"/>
<dbReference type="HOGENOM" id="CLU_020515_6_1_1"/>
<dbReference type="InParanoid" id="O18831"/>
<dbReference type="OMA" id="CNACMWR"/>
<dbReference type="TreeFam" id="TF318514"/>
<dbReference type="Proteomes" id="UP000008227">
    <property type="component" value="Chromosome 15"/>
</dbReference>
<dbReference type="Proteomes" id="UP000314985">
    <property type="component" value="Chromosome 15"/>
</dbReference>
<dbReference type="Proteomes" id="UP000694570">
    <property type="component" value="Unplaced"/>
</dbReference>
<dbReference type="Proteomes" id="UP000694571">
    <property type="component" value="Unplaced"/>
</dbReference>
<dbReference type="Proteomes" id="UP000694720">
    <property type="component" value="Unplaced"/>
</dbReference>
<dbReference type="Proteomes" id="UP000694722">
    <property type="component" value="Unplaced"/>
</dbReference>
<dbReference type="Proteomes" id="UP000694723">
    <property type="component" value="Unplaced"/>
</dbReference>
<dbReference type="Proteomes" id="UP000694724">
    <property type="component" value="Unplaced"/>
</dbReference>
<dbReference type="Proteomes" id="UP000694725">
    <property type="component" value="Unplaced"/>
</dbReference>
<dbReference type="Proteomes" id="UP000694726">
    <property type="component" value="Unplaced"/>
</dbReference>
<dbReference type="Proteomes" id="UP000694727">
    <property type="component" value="Unplaced"/>
</dbReference>
<dbReference type="Proteomes" id="UP000694728">
    <property type="component" value="Unplaced"/>
</dbReference>
<dbReference type="Bgee" id="ENSSSCG00000016047">
    <property type="expression patterns" value="Expressed in skeletal muscle tissue and 16 other cell types or tissues"/>
</dbReference>
<dbReference type="ExpressionAtlas" id="O18831">
    <property type="expression patterns" value="baseline"/>
</dbReference>
<dbReference type="GO" id="GO:0005615">
    <property type="term" value="C:extracellular space"/>
    <property type="evidence" value="ECO:0000318"/>
    <property type="project" value="GO_Central"/>
</dbReference>
<dbReference type="GO" id="GO:0005125">
    <property type="term" value="F:cytokine activity"/>
    <property type="evidence" value="ECO:0000318"/>
    <property type="project" value="GO_Central"/>
</dbReference>
<dbReference type="GO" id="GO:0008083">
    <property type="term" value="F:growth factor activity"/>
    <property type="evidence" value="ECO:0007669"/>
    <property type="project" value="UniProtKB-KW"/>
</dbReference>
<dbReference type="GO" id="GO:0008201">
    <property type="term" value="F:heparin binding"/>
    <property type="evidence" value="ECO:0007669"/>
    <property type="project" value="UniProtKB-KW"/>
</dbReference>
<dbReference type="GO" id="GO:0042802">
    <property type="term" value="F:identical protein binding"/>
    <property type="evidence" value="ECO:0000250"/>
    <property type="project" value="UniProtKB"/>
</dbReference>
<dbReference type="GO" id="GO:0042803">
    <property type="term" value="F:protein homodimerization activity"/>
    <property type="evidence" value="ECO:0007669"/>
    <property type="project" value="Ensembl"/>
</dbReference>
<dbReference type="GO" id="GO:0043539">
    <property type="term" value="F:protein serine/threonine kinase activator activity"/>
    <property type="evidence" value="ECO:0007669"/>
    <property type="project" value="Ensembl"/>
</dbReference>
<dbReference type="GO" id="GO:0071549">
    <property type="term" value="P:cellular response to dexamethasone stimulus"/>
    <property type="evidence" value="ECO:0007669"/>
    <property type="project" value="Ensembl"/>
</dbReference>
<dbReference type="GO" id="GO:0046716">
    <property type="term" value="P:muscle cell cellular homeostasis"/>
    <property type="evidence" value="ECO:0007669"/>
    <property type="project" value="Ensembl"/>
</dbReference>
<dbReference type="GO" id="GO:0014839">
    <property type="term" value="P:myoblast migration involved in skeletal muscle regeneration"/>
    <property type="evidence" value="ECO:0000250"/>
    <property type="project" value="UniProtKB"/>
</dbReference>
<dbReference type="GO" id="GO:0046627">
    <property type="term" value="P:negative regulation of insulin receptor signaling pathway"/>
    <property type="evidence" value="ECO:0007669"/>
    <property type="project" value="Ensembl"/>
</dbReference>
<dbReference type="GO" id="GO:0045662">
    <property type="term" value="P:negative regulation of myoblast differentiation"/>
    <property type="evidence" value="ECO:0007669"/>
    <property type="project" value="Ensembl"/>
</dbReference>
<dbReference type="GO" id="GO:2000818">
    <property type="term" value="P:negative regulation of myoblast proliferation"/>
    <property type="evidence" value="ECO:0000250"/>
    <property type="project" value="AgBase"/>
</dbReference>
<dbReference type="GO" id="GO:0051898">
    <property type="term" value="P:negative regulation of phosphatidylinositol 3-kinase/protein kinase B signal transduction"/>
    <property type="evidence" value="ECO:0007669"/>
    <property type="project" value="Ensembl"/>
</dbReference>
<dbReference type="GO" id="GO:1902725">
    <property type="term" value="P:negative regulation of satellite cell differentiation"/>
    <property type="evidence" value="ECO:0000250"/>
    <property type="project" value="AgBase"/>
</dbReference>
<dbReference type="GO" id="GO:1902723">
    <property type="term" value="P:negative regulation of skeletal muscle satellite cell proliferation"/>
    <property type="evidence" value="ECO:0000250"/>
    <property type="project" value="AgBase"/>
</dbReference>
<dbReference type="GO" id="GO:0048632">
    <property type="term" value="P:negative regulation of skeletal muscle tissue growth"/>
    <property type="evidence" value="ECO:0007669"/>
    <property type="project" value="Ensembl"/>
</dbReference>
<dbReference type="GO" id="GO:0045893">
    <property type="term" value="P:positive regulation of DNA-templated transcription"/>
    <property type="evidence" value="ECO:0007669"/>
    <property type="project" value="Ensembl"/>
</dbReference>
<dbReference type="GO" id="GO:0010592">
    <property type="term" value="P:positive regulation of lamellipodium assembly"/>
    <property type="evidence" value="ECO:0000250"/>
    <property type="project" value="UniProtKB"/>
</dbReference>
<dbReference type="GO" id="GO:0010759">
    <property type="term" value="P:positive regulation of macrophage chemotaxis"/>
    <property type="evidence" value="ECO:0000250"/>
    <property type="project" value="UniProtKB"/>
</dbReference>
<dbReference type="GO" id="GO:0014816">
    <property type="term" value="P:skeletal muscle satellite cell differentiation"/>
    <property type="evidence" value="ECO:0007669"/>
    <property type="project" value="Ensembl"/>
</dbReference>
<dbReference type="GO" id="GO:0007179">
    <property type="term" value="P:transforming growth factor beta receptor signaling pathway"/>
    <property type="evidence" value="ECO:0007669"/>
    <property type="project" value="Ensembl"/>
</dbReference>
<dbReference type="CDD" id="cd19388">
    <property type="entry name" value="TGF_beta_GDF8"/>
    <property type="match status" value="1"/>
</dbReference>
<dbReference type="FunFam" id="2.60.120.970:FF:000001">
    <property type="entry name" value="Growth/differentiation factor 8"/>
    <property type="match status" value="1"/>
</dbReference>
<dbReference type="FunFam" id="2.10.90.10:FF:000006">
    <property type="entry name" value="growth/differentiation factor 8"/>
    <property type="match status" value="1"/>
</dbReference>
<dbReference type="Gene3D" id="2.60.120.970">
    <property type="match status" value="1"/>
</dbReference>
<dbReference type="Gene3D" id="2.10.90.10">
    <property type="entry name" value="Cystine-knot cytokines"/>
    <property type="match status" value="1"/>
</dbReference>
<dbReference type="InterPro" id="IPR029034">
    <property type="entry name" value="Cystine-knot_cytokine"/>
</dbReference>
<dbReference type="InterPro" id="IPR001839">
    <property type="entry name" value="TGF-b_C"/>
</dbReference>
<dbReference type="InterPro" id="IPR001111">
    <property type="entry name" value="TGF-b_propeptide"/>
</dbReference>
<dbReference type="InterPro" id="IPR015615">
    <property type="entry name" value="TGF-beta-rel"/>
</dbReference>
<dbReference type="InterPro" id="IPR017948">
    <property type="entry name" value="TGFb_CS"/>
</dbReference>
<dbReference type="PANTHER" id="PTHR11848:SF150">
    <property type="entry name" value="GROWTH_DIFFERENTIATION FACTOR 8"/>
    <property type="match status" value="1"/>
</dbReference>
<dbReference type="PANTHER" id="PTHR11848">
    <property type="entry name" value="TGF-BETA FAMILY"/>
    <property type="match status" value="1"/>
</dbReference>
<dbReference type="Pfam" id="PF00019">
    <property type="entry name" value="TGF_beta"/>
    <property type="match status" value="1"/>
</dbReference>
<dbReference type="Pfam" id="PF00688">
    <property type="entry name" value="TGFb_propeptide"/>
    <property type="match status" value="1"/>
</dbReference>
<dbReference type="SMART" id="SM00204">
    <property type="entry name" value="TGFB"/>
    <property type="match status" value="1"/>
</dbReference>
<dbReference type="SUPFAM" id="SSF57501">
    <property type="entry name" value="Cystine-knot cytokines"/>
    <property type="match status" value="1"/>
</dbReference>
<dbReference type="PROSITE" id="PS00250">
    <property type="entry name" value="TGF_BETA_1"/>
    <property type="match status" value="1"/>
</dbReference>
<dbReference type="PROSITE" id="PS51362">
    <property type="entry name" value="TGF_BETA_2"/>
    <property type="match status" value="1"/>
</dbReference>
<organism>
    <name type="scientific">Sus scrofa</name>
    <name type="common">Pig</name>
    <dbReference type="NCBI Taxonomy" id="9823"/>
    <lineage>
        <taxon>Eukaryota</taxon>
        <taxon>Metazoa</taxon>
        <taxon>Chordata</taxon>
        <taxon>Craniata</taxon>
        <taxon>Vertebrata</taxon>
        <taxon>Euteleostomi</taxon>
        <taxon>Mammalia</taxon>
        <taxon>Eutheria</taxon>
        <taxon>Laurasiatheria</taxon>
        <taxon>Artiodactyla</taxon>
        <taxon>Suina</taxon>
        <taxon>Suidae</taxon>
        <taxon>Sus</taxon>
    </lineage>
</organism>
<sequence length="375" mass="42791">MQKLQIYVYIYLFMLIVAGPVDLNENSEQKENVEKEGLCNACMWRQNTKSSRLEAIKIQILSKLRLETAPNISKDAIRQLLPKAPPLRELIDQYDVQRDDSSDGSLEDDDYHATTETIITMPTESDLLMQVEGKPKCCFFKFSSKIQYNKVVKAQLWIYLRPVKTPTTVFVQILRLIKPMKDGTRYTGIRSLKLDMNPGTGIWQSIDVKTVLQNWLKQPESNLGIEIKALDENGHDLAVTFPGPGEDGLNPFLEVKVTDTPKRSRRDFGLDCDEHSTESRCCRYPLTVDFEAFGWDWIIAPKRYKANYCSGECEFVFLQKYPHTHLVHQANPRGSAGPCCTPTKMSPINMLYFNGKEQIIYGKIPAMVVDRCGCS</sequence>
<protein>
    <recommendedName>
        <fullName>Growth/differentiation factor 8</fullName>
        <shortName>GDF-8</shortName>
    </recommendedName>
    <alternativeName>
        <fullName>Myostatin</fullName>
    </alternativeName>
</protein>
<accession>O18831</accession>
<accession>Q540D6</accession>